<evidence type="ECO:0000250" key="1"/>
<evidence type="ECO:0000250" key="2">
    <source>
        <dbReference type="UniProtKB" id="Q9ULC4"/>
    </source>
</evidence>
<evidence type="ECO:0000255" key="3">
    <source>
        <dbReference type="PROSITE-ProRule" id="PRU00161"/>
    </source>
</evidence>
<evidence type="ECO:0000305" key="4"/>
<protein>
    <recommendedName>
        <fullName>Malignant T-cell-amplified sequence 1</fullName>
        <shortName>MCT-1</shortName>
    </recommendedName>
</protein>
<gene>
    <name type="primary">Mcts1</name>
</gene>
<proteinExistence type="evidence at transcript level"/>
<reference key="1">
    <citation type="journal article" date="2004" name="Genome Res.">
        <title>The status, quality, and expansion of the NIH full-length cDNA project: the Mammalian Gene Collection (MGC).</title>
        <authorList>
            <consortium name="The MGC Project Team"/>
        </authorList>
    </citation>
    <scope>NUCLEOTIDE SEQUENCE [LARGE SCALE MRNA]</scope>
    <source>
        <tissue>Spleen</tissue>
    </source>
</reference>
<accession>Q4G009</accession>
<sequence length="182" mass="20550">MGKGRFDEKENVSNCIQLKTSVIKGIKNQLLEQFPGIEPWLNQIMPKKDPVKIVRCHEHIEILTVNGELLFFRQREGPFYPTLRLLHKYPFILPHQQVDKGAIKFVLSGANIMCPGLTSPGAKLYPAAVDTIVAIMAEGKQHALCVGVMKMSAEDIEKVNKGIGIENIHYLNDGLWHMKTYK</sequence>
<keyword id="KW-0131">Cell cycle</keyword>
<keyword id="KW-0963">Cytoplasm</keyword>
<keyword id="KW-0227">DNA damage</keyword>
<keyword id="KW-0341">Growth regulation</keyword>
<keyword id="KW-0597">Phosphoprotein</keyword>
<keyword id="KW-1185">Reference proteome</keyword>
<keyword id="KW-0804">Transcription</keyword>
<keyword id="KW-0805">Transcription regulation</keyword>
<keyword id="KW-0043">Tumor suppressor</keyword>
<organism>
    <name type="scientific">Rattus norvegicus</name>
    <name type="common">Rat</name>
    <dbReference type="NCBI Taxonomy" id="10116"/>
    <lineage>
        <taxon>Eukaryota</taxon>
        <taxon>Metazoa</taxon>
        <taxon>Chordata</taxon>
        <taxon>Craniata</taxon>
        <taxon>Vertebrata</taxon>
        <taxon>Euteleostomi</taxon>
        <taxon>Mammalia</taxon>
        <taxon>Eutheria</taxon>
        <taxon>Euarchontoglires</taxon>
        <taxon>Glires</taxon>
        <taxon>Rodentia</taxon>
        <taxon>Myomorpha</taxon>
        <taxon>Muroidea</taxon>
        <taxon>Muridae</taxon>
        <taxon>Murinae</taxon>
        <taxon>Rattus</taxon>
    </lineage>
</organism>
<comment type="function">
    <text evidence="2">Translation regulator forming a complex with DENR to promote translation reinitiation. Translation reinitiation is the process where the small ribosomal subunit remains attached to the mRNA following termination of translation of a regulatory upstream ORF (uORF), and resume scanning on the same mRNA molecule to initiate translation of a downstream ORF, usually the main ORF (mORF). The MCTS1/DENR complex is pivotal to two linked mechanisms essential for translation reinitiation. Firstly, the dissociation of deacylated tRNAs from post-termination 40S ribosomal complexes during ribosome recycling. Secondly, the recruitment in an EIF2-independent manner of aminoacylated initiator tRNA to P site of 40S ribosomes for a new round of translation. This regulatory mechanism governs the translation of more than 150 genes which translation reinitiation is MCTS1/DENR complex-dependent. Consequently, modulates various unrelated biological processes including cell cycle regulation and DNA damage signaling and repair. Notably, it positively regulates interferon gamma immunity to mycobacteria by enhancing the translation of JAK2.</text>
</comment>
<comment type="subunit">
    <text evidence="2">Interacts (via PUA domain) with DENR; the complex regulates translation reinitiation.</text>
</comment>
<comment type="subcellular location">
    <subcellularLocation>
        <location evidence="2">Cytoplasm</location>
    </subcellularLocation>
    <text evidence="2">Nuclear relocalization after DNA damage.</text>
</comment>
<comment type="domain">
    <text>The PUA RNA-binding domain is critical for cap binding, but not sufficient for translation enhancer function. MCT1 N-terminal region is required to enhance translation possibly through interaction with other proteins.</text>
</comment>
<comment type="PTM">
    <text evidence="1">Phosphorylation is critical for stabilization and promotion of cell proliferation.</text>
</comment>
<comment type="similarity">
    <text evidence="4">Belongs to the MCTS1 family.</text>
</comment>
<name>MCTS1_RAT</name>
<dbReference type="EMBL" id="BC098848">
    <property type="protein sequence ID" value="AAH98848.1"/>
    <property type="molecule type" value="mRNA"/>
</dbReference>
<dbReference type="RefSeq" id="NP_001037702.1">
    <property type="nucleotide sequence ID" value="NM_001044237.2"/>
</dbReference>
<dbReference type="SMR" id="Q4G009"/>
<dbReference type="BioGRID" id="257211">
    <property type="interactions" value="1"/>
</dbReference>
<dbReference type="FunCoup" id="Q4G009">
    <property type="interactions" value="1922"/>
</dbReference>
<dbReference type="STRING" id="10116.ENSRNOP00000061717"/>
<dbReference type="iPTMnet" id="Q4G009"/>
<dbReference type="PhosphoSitePlus" id="Q4G009"/>
<dbReference type="jPOST" id="Q4G009"/>
<dbReference type="PaxDb" id="10116-ENSRNOP00000061717"/>
<dbReference type="Ensembl" id="ENSRNOT00000066677.2">
    <property type="protein sequence ID" value="ENSRNOP00000061717.1"/>
    <property type="gene ID" value="ENSRNOG00000002563.8"/>
</dbReference>
<dbReference type="GeneID" id="302500"/>
<dbReference type="KEGG" id="rno:302500"/>
<dbReference type="UCSC" id="RGD:1566390">
    <property type="organism name" value="rat"/>
</dbReference>
<dbReference type="AGR" id="RGD:1566390"/>
<dbReference type="CTD" id="28985"/>
<dbReference type="RGD" id="1566390">
    <property type="gene designation" value="Mcts1"/>
</dbReference>
<dbReference type="eggNOG" id="KOG2523">
    <property type="taxonomic scope" value="Eukaryota"/>
</dbReference>
<dbReference type="GeneTree" id="ENSGT00550000074964"/>
<dbReference type="InParanoid" id="Q4G009"/>
<dbReference type="OrthoDB" id="10249667at2759"/>
<dbReference type="PhylomeDB" id="Q4G009"/>
<dbReference type="TreeFam" id="TF315123"/>
<dbReference type="PRO" id="PR:Q4G009"/>
<dbReference type="Proteomes" id="UP000002494">
    <property type="component" value="Chromosome X"/>
</dbReference>
<dbReference type="Bgee" id="ENSRNOG00000002563">
    <property type="expression patterns" value="Expressed in pancreas and 20 other cell types or tissues"/>
</dbReference>
<dbReference type="ExpressionAtlas" id="Q4G009">
    <property type="expression patterns" value="baseline and differential"/>
</dbReference>
<dbReference type="GO" id="GO:0005737">
    <property type="term" value="C:cytoplasm"/>
    <property type="evidence" value="ECO:0000250"/>
    <property type="project" value="UniProtKB"/>
</dbReference>
<dbReference type="GO" id="GO:0043024">
    <property type="term" value="F:ribosomal small subunit binding"/>
    <property type="evidence" value="ECO:0000250"/>
    <property type="project" value="UniProtKB"/>
</dbReference>
<dbReference type="GO" id="GO:0000339">
    <property type="term" value="F:RNA cap binding"/>
    <property type="evidence" value="ECO:0000250"/>
    <property type="project" value="UniProtKB"/>
</dbReference>
<dbReference type="GO" id="GO:0045183">
    <property type="term" value="F:translation factor activity, non-nucleic acid binding"/>
    <property type="evidence" value="ECO:0000266"/>
    <property type="project" value="RGD"/>
</dbReference>
<dbReference type="GO" id="GO:0003743">
    <property type="term" value="F:translation initiation factor activity"/>
    <property type="evidence" value="ECO:0000250"/>
    <property type="project" value="UniProtKB"/>
</dbReference>
<dbReference type="GO" id="GO:0006974">
    <property type="term" value="P:DNA damage response"/>
    <property type="evidence" value="ECO:0007669"/>
    <property type="project" value="UniProtKB-KW"/>
</dbReference>
<dbReference type="GO" id="GO:0001731">
    <property type="term" value="P:formation of translation preinitiation complex"/>
    <property type="evidence" value="ECO:0000266"/>
    <property type="project" value="RGD"/>
</dbReference>
<dbReference type="GO" id="GO:0075522">
    <property type="term" value="P:IRES-dependent viral translational initiation"/>
    <property type="evidence" value="ECO:0000266"/>
    <property type="project" value="RGD"/>
</dbReference>
<dbReference type="GO" id="GO:0032790">
    <property type="term" value="P:ribosome disassembly"/>
    <property type="evidence" value="ECO:0000250"/>
    <property type="project" value="UniProtKB"/>
</dbReference>
<dbReference type="GO" id="GO:0002188">
    <property type="term" value="P:translation reinitiation"/>
    <property type="evidence" value="ECO:0000250"/>
    <property type="project" value="UniProtKB"/>
</dbReference>
<dbReference type="CDD" id="cd11609">
    <property type="entry name" value="MCT1_N"/>
    <property type="match status" value="1"/>
</dbReference>
<dbReference type="CDD" id="cd21155">
    <property type="entry name" value="PUA_MCTS-1-like"/>
    <property type="match status" value="1"/>
</dbReference>
<dbReference type="FunFam" id="3.10.400.20:FF:000001">
    <property type="entry name" value="Malignant T-cell-amplified sequence 1"/>
    <property type="match status" value="1"/>
</dbReference>
<dbReference type="Gene3D" id="3.10.400.20">
    <property type="match status" value="1"/>
</dbReference>
<dbReference type="InterPro" id="IPR016437">
    <property type="entry name" value="MCT-1/Tma20"/>
</dbReference>
<dbReference type="InterPro" id="IPR041366">
    <property type="entry name" value="Pre-PUA"/>
</dbReference>
<dbReference type="InterPro" id="IPR002478">
    <property type="entry name" value="PUA"/>
</dbReference>
<dbReference type="InterPro" id="IPR015947">
    <property type="entry name" value="PUA-like_sf"/>
</dbReference>
<dbReference type="InterPro" id="IPR004521">
    <property type="entry name" value="Uncharacterised_CHP00451"/>
</dbReference>
<dbReference type="NCBIfam" id="TIGR00451">
    <property type="entry name" value="unchar_dom_2"/>
    <property type="match status" value="1"/>
</dbReference>
<dbReference type="PANTHER" id="PTHR22798:SF10">
    <property type="entry name" value="MALIGNANT T-CELL-AMPLIFIED SEQUENCE 1"/>
    <property type="match status" value="1"/>
</dbReference>
<dbReference type="PANTHER" id="PTHR22798">
    <property type="entry name" value="MCT-1 PROTEIN"/>
    <property type="match status" value="1"/>
</dbReference>
<dbReference type="Pfam" id="PF17832">
    <property type="entry name" value="Pre-PUA"/>
    <property type="match status" value="1"/>
</dbReference>
<dbReference type="Pfam" id="PF01472">
    <property type="entry name" value="PUA"/>
    <property type="match status" value="1"/>
</dbReference>
<dbReference type="PIRSF" id="PIRSF005067">
    <property type="entry name" value="Tma_RNA-bind_prd"/>
    <property type="match status" value="1"/>
</dbReference>
<dbReference type="SMART" id="SM00359">
    <property type="entry name" value="PUA"/>
    <property type="match status" value="1"/>
</dbReference>
<dbReference type="SUPFAM" id="SSF88697">
    <property type="entry name" value="PUA domain-like"/>
    <property type="match status" value="1"/>
</dbReference>
<dbReference type="PROSITE" id="PS50890">
    <property type="entry name" value="PUA"/>
    <property type="match status" value="1"/>
</dbReference>
<feature type="chain" id="PRO_0000344789" description="Malignant T-cell-amplified sequence 1">
    <location>
        <begin position="1"/>
        <end position="182"/>
    </location>
</feature>
<feature type="domain" description="PUA" evidence="3">
    <location>
        <begin position="93"/>
        <end position="172"/>
    </location>
</feature>
<feature type="modified residue" description="Phosphothreonine" evidence="2">
    <location>
        <position position="82"/>
    </location>
</feature>
<feature type="modified residue" description="Phosphoserine" evidence="2">
    <location>
        <position position="119"/>
    </location>
</feature>